<accession>Q9NVQ4</accession>
<accession>Q6IAN2</accession>
<comment type="function">
    <text evidence="1">Plays a role as an inducible effector molecule that mediates Fas resistance produced by surface Ig engagement in B cells.</text>
</comment>
<comment type="interaction">
    <interactant intactId="EBI-10314711">
        <id>Q9NVQ4</id>
    </interactant>
    <interactant intactId="EBI-742487">
        <id>O43597</id>
        <label>SPRY2</label>
    </interactant>
    <organismsDiffer>false</organismsDiffer>
    <experiments>3</experiments>
</comment>
<comment type="interaction">
    <interactant intactId="EBI-10314711">
        <id>Q9NVQ4</id>
    </interactant>
    <interactant intactId="EBI-723239">
        <id>O94967</id>
        <label>WDR47</label>
    </interactant>
    <organismsDiffer>false</organismsDiffer>
    <experiments>2</experiments>
</comment>
<comment type="interaction">
    <interactant intactId="EBI-12039347">
        <id>Q9NVQ4-2</id>
    </interactant>
    <interactant intactId="EBI-11063830">
        <id>Q86X02</id>
        <label>CDR2L</label>
    </interactant>
    <organismsDiffer>false</organismsDiffer>
    <experiments>6</experiments>
</comment>
<comment type="interaction">
    <interactant intactId="EBI-12039347">
        <id>Q9NVQ4-2</id>
    </interactant>
    <interactant intactId="EBI-3918199">
        <id>Q9UN19</id>
        <label>DAPP1</label>
    </interactant>
    <organismsDiffer>false</organismsDiffer>
    <experiments>3</experiments>
</comment>
<comment type="interaction">
    <interactant intactId="EBI-12039347">
        <id>Q9NVQ4-2</id>
    </interactant>
    <interactant intactId="EBI-6509505">
        <id>Q0VD86</id>
        <label>INCA1</label>
    </interactant>
    <organismsDiffer>false</organismsDiffer>
    <experiments>3</experiments>
</comment>
<comment type="interaction">
    <interactant intactId="EBI-12039347">
        <id>Q9NVQ4-2</id>
    </interactant>
    <interactant intactId="EBI-12039345">
        <id>Q9UBR4-2</id>
        <label>LHX3</label>
    </interactant>
    <organismsDiffer>false</organismsDiffer>
    <experiments>3</experiments>
</comment>
<comment type="interaction">
    <interactant intactId="EBI-12039347">
        <id>Q9NVQ4-2</id>
    </interactant>
    <interactant intactId="EBI-6929619">
        <id>Q9BVG3</id>
        <label>TRIM62</label>
    </interactant>
    <organismsDiffer>false</organismsDiffer>
    <experiments>3</experiments>
</comment>
<comment type="interaction">
    <interactant intactId="EBI-12039347">
        <id>Q9NVQ4-2</id>
    </interactant>
    <interactant intactId="EBI-3921553">
        <id>P17020</id>
        <label>ZNF16</label>
    </interactant>
    <organismsDiffer>false</organismsDiffer>
    <experiments>3</experiments>
</comment>
<comment type="interaction">
    <interactant intactId="EBI-12039347">
        <id>Q9NVQ4-2</id>
    </interactant>
    <interactant intactId="EBI-527853">
        <id>Q9UGI0</id>
        <label>ZRANB1</label>
    </interactant>
    <organismsDiffer>false</organismsDiffer>
    <experiments>3</experiments>
</comment>
<comment type="subcellular location">
    <subcellularLocation>
        <location evidence="1">Cytoplasm</location>
    </subcellularLocation>
</comment>
<comment type="alternative products">
    <event type="alternative splicing"/>
    <isoform>
        <id>Q9NVQ4-1</id>
        <name>1</name>
        <name>FAIM-S</name>
        <sequence type="displayed"/>
    </isoform>
    <isoform>
        <id>Q9NVQ4-2</id>
        <name>2</name>
        <sequence type="described" ref="VSP_008991"/>
    </isoform>
    <isoform>
        <id>Q9NVQ4-3</id>
        <name>3</name>
        <name>FAIM-L</name>
        <sequence type="described" ref="VSP_038095"/>
    </isoform>
</comment>
<comment type="similarity">
    <text evidence="6">Belongs to the FAIM1 family.</text>
</comment>
<comment type="sequence caution" evidence="6">
    <conflict type="miscellaneous discrepancy">
        <sequence resource="EMBL-CDS" id="BAC86174"/>
    </conflict>
    <text>Intron retention.</text>
</comment>
<comment type="online information" name="Atlas of Genetics and Cytogenetics in Oncology and Haematology">
    <link uri="https://atlasgeneticsoncology.org/gene/43251/FAIM"/>
</comment>
<reference key="1">
    <citation type="journal article" date="2004" name="Nat. Genet.">
        <title>Complete sequencing and characterization of 21,243 full-length human cDNAs.</title>
        <authorList>
            <person name="Ota T."/>
            <person name="Suzuki Y."/>
            <person name="Nishikawa T."/>
            <person name="Otsuki T."/>
            <person name="Sugiyama T."/>
            <person name="Irie R."/>
            <person name="Wakamatsu A."/>
            <person name="Hayashi K."/>
            <person name="Sato H."/>
            <person name="Nagai K."/>
            <person name="Kimura K."/>
            <person name="Makita H."/>
            <person name="Sekine M."/>
            <person name="Obayashi M."/>
            <person name="Nishi T."/>
            <person name="Shibahara T."/>
            <person name="Tanaka T."/>
            <person name="Ishii S."/>
            <person name="Yamamoto J."/>
            <person name="Saito K."/>
            <person name="Kawai Y."/>
            <person name="Isono Y."/>
            <person name="Nakamura Y."/>
            <person name="Nagahari K."/>
            <person name="Murakami K."/>
            <person name="Yasuda T."/>
            <person name="Iwayanagi T."/>
            <person name="Wagatsuma M."/>
            <person name="Shiratori A."/>
            <person name="Sudo H."/>
            <person name="Hosoiri T."/>
            <person name="Kaku Y."/>
            <person name="Kodaira H."/>
            <person name="Kondo H."/>
            <person name="Sugawara M."/>
            <person name="Takahashi M."/>
            <person name="Kanda K."/>
            <person name="Yokoi T."/>
            <person name="Furuya T."/>
            <person name="Kikkawa E."/>
            <person name="Omura Y."/>
            <person name="Abe K."/>
            <person name="Kamihara K."/>
            <person name="Katsuta N."/>
            <person name="Sato K."/>
            <person name="Tanikawa M."/>
            <person name="Yamazaki M."/>
            <person name="Ninomiya K."/>
            <person name="Ishibashi T."/>
            <person name="Yamashita H."/>
            <person name="Murakawa K."/>
            <person name="Fujimori K."/>
            <person name="Tanai H."/>
            <person name="Kimata M."/>
            <person name="Watanabe M."/>
            <person name="Hiraoka S."/>
            <person name="Chiba Y."/>
            <person name="Ishida S."/>
            <person name="Ono Y."/>
            <person name="Takiguchi S."/>
            <person name="Watanabe S."/>
            <person name="Yosida M."/>
            <person name="Hotuta T."/>
            <person name="Kusano J."/>
            <person name="Kanehori K."/>
            <person name="Takahashi-Fujii A."/>
            <person name="Hara H."/>
            <person name="Tanase T.-O."/>
            <person name="Nomura Y."/>
            <person name="Togiya S."/>
            <person name="Komai F."/>
            <person name="Hara R."/>
            <person name="Takeuchi K."/>
            <person name="Arita M."/>
            <person name="Imose N."/>
            <person name="Musashino K."/>
            <person name="Yuuki H."/>
            <person name="Oshima A."/>
            <person name="Sasaki N."/>
            <person name="Aotsuka S."/>
            <person name="Yoshikawa Y."/>
            <person name="Matsunawa H."/>
            <person name="Ichihara T."/>
            <person name="Shiohata N."/>
            <person name="Sano S."/>
            <person name="Moriya S."/>
            <person name="Momiyama H."/>
            <person name="Satoh N."/>
            <person name="Takami S."/>
            <person name="Terashima Y."/>
            <person name="Suzuki O."/>
            <person name="Nakagawa S."/>
            <person name="Senoh A."/>
            <person name="Mizoguchi H."/>
            <person name="Goto Y."/>
            <person name="Shimizu F."/>
            <person name="Wakebe H."/>
            <person name="Hishigaki H."/>
            <person name="Watanabe T."/>
            <person name="Sugiyama A."/>
            <person name="Takemoto M."/>
            <person name="Kawakami B."/>
            <person name="Yamazaki M."/>
            <person name="Watanabe K."/>
            <person name="Kumagai A."/>
            <person name="Itakura S."/>
            <person name="Fukuzumi Y."/>
            <person name="Fujimori Y."/>
            <person name="Komiyama M."/>
            <person name="Tashiro H."/>
            <person name="Tanigami A."/>
            <person name="Fujiwara T."/>
            <person name="Ono T."/>
            <person name="Yamada K."/>
            <person name="Fujii Y."/>
            <person name="Ozaki K."/>
            <person name="Hirao M."/>
            <person name="Ohmori Y."/>
            <person name="Kawabata A."/>
            <person name="Hikiji T."/>
            <person name="Kobatake N."/>
            <person name="Inagaki H."/>
            <person name="Ikema Y."/>
            <person name="Okamoto S."/>
            <person name="Okitani R."/>
            <person name="Kawakami T."/>
            <person name="Noguchi S."/>
            <person name="Itoh T."/>
            <person name="Shigeta K."/>
            <person name="Senba T."/>
            <person name="Matsumura K."/>
            <person name="Nakajima Y."/>
            <person name="Mizuno T."/>
            <person name="Morinaga M."/>
            <person name="Sasaki M."/>
            <person name="Togashi T."/>
            <person name="Oyama M."/>
            <person name="Hata H."/>
            <person name="Watanabe M."/>
            <person name="Komatsu T."/>
            <person name="Mizushima-Sugano J."/>
            <person name="Satoh T."/>
            <person name="Shirai Y."/>
            <person name="Takahashi Y."/>
            <person name="Nakagawa K."/>
            <person name="Okumura K."/>
            <person name="Nagase T."/>
            <person name="Nomura N."/>
            <person name="Kikuchi H."/>
            <person name="Masuho Y."/>
            <person name="Yamashita R."/>
            <person name="Nakai K."/>
            <person name="Yada T."/>
            <person name="Nakamura Y."/>
            <person name="Ohara O."/>
            <person name="Isogai T."/>
            <person name="Sugano S."/>
        </authorList>
    </citation>
    <scope>NUCLEOTIDE SEQUENCE [LARGE SCALE MRNA] (ISOFORM 1)</scope>
    <scope>NUCLEOTIDE SEQUENCE [LARGE SCALE MRNA] OF 1-130 (ISOFORM 2)</scope>
    <source>
        <tissue>Brain</tissue>
    </source>
</reference>
<reference key="2">
    <citation type="submission" date="2004-06" db="EMBL/GenBank/DDBJ databases">
        <title>Cloning of human full open reading frames in Gateway(TM) system entry vector (pDONR201).</title>
        <authorList>
            <person name="Ebert L."/>
            <person name="Schick M."/>
            <person name="Neubert P."/>
            <person name="Schatten R."/>
            <person name="Henze S."/>
            <person name="Korn B."/>
        </authorList>
    </citation>
    <scope>NUCLEOTIDE SEQUENCE [LARGE SCALE MRNA] (ISOFORM 1)</scope>
    <scope>VARIANT THR-117</scope>
</reference>
<reference key="3">
    <citation type="journal article" date="2006" name="Nature">
        <title>The DNA sequence, annotation and analysis of human chromosome 3.</title>
        <authorList>
            <person name="Muzny D.M."/>
            <person name="Scherer S.E."/>
            <person name="Kaul R."/>
            <person name="Wang J."/>
            <person name="Yu J."/>
            <person name="Sudbrak R."/>
            <person name="Buhay C.J."/>
            <person name="Chen R."/>
            <person name="Cree A."/>
            <person name="Ding Y."/>
            <person name="Dugan-Rocha S."/>
            <person name="Gill R."/>
            <person name="Gunaratne P."/>
            <person name="Harris R.A."/>
            <person name="Hawes A.C."/>
            <person name="Hernandez J."/>
            <person name="Hodgson A.V."/>
            <person name="Hume J."/>
            <person name="Jackson A."/>
            <person name="Khan Z.M."/>
            <person name="Kovar-Smith C."/>
            <person name="Lewis L.R."/>
            <person name="Lozado R.J."/>
            <person name="Metzker M.L."/>
            <person name="Milosavljevic A."/>
            <person name="Miner G.R."/>
            <person name="Morgan M.B."/>
            <person name="Nazareth L.V."/>
            <person name="Scott G."/>
            <person name="Sodergren E."/>
            <person name="Song X.-Z."/>
            <person name="Steffen D."/>
            <person name="Wei S."/>
            <person name="Wheeler D.A."/>
            <person name="Wright M.W."/>
            <person name="Worley K.C."/>
            <person name="Yuan Y."/>
            <person name="Zhang Z."/>
            <person name="Adams C.Q."/>
            <person name="Ansari-Lari M.A."/>
            <person name="Ayele M."/>
            <person name="Brown M.J."/>
            <person name="Chen G."/>
            <person name="Chen Z."/>
            <person name="Clendenning J."/>
            <person name="Clerc-Blankenburg K.P."/>
            <person name="Chen R."/>
            <person name="Chen Z."/>
            <person name="Davis C."/>
            <person name="Delgado O."/>
            <person name="Dinh H.H."/>
            <person name="Dong W."/>
            <person name="Draper H."/>
            <person name="Ernst S."/>
            <person name="Fu G."/>
            <person name="Gonzalez-Garay M.L."/>
            <person name="Garcia D.K."/>
            <person name="Gillett W."/>
            <person name="Gu J."/>
            <person name="Hao B."/>
            <person name="Haugen E."/>
            <person name="Havlak P."/>
            <person name="He X."/>
            <person name="Hennig S."/>
            <person name="Hu S."/>
            <person name="Huang W."/>
            <person name="Jackson L.R."/>
            <person name="Jacob L.S."/>
            <person name="Kelly S.H."/>
            <person name="Kube M."/>
            <person name="Levy R."/>
            <person name="Li Z."/>
            <person name="Liu B."/>
            <person name="Liu J."/>
            <person name="Liu W."/>
            <person name="Lu J."/>
            <person name="Maheshwari M."/>
            <person name="Nguyen B.-V."/>
            <person name="Okwuonu G.O."/>
            <person name="Palmeiri A."/>
            <person name="Pasternak S."/>
            <person name="Perez L.M."/>
            <person name="Phelps K.A."/>
            <person name="Plopper F.J."/>
            <person name="Qiang B."/>
            <person name="Raymond C."/>
            <person name="Rodriguez R."/>
            <person name="Saenphimmachak C."/>
            <person name="Santibanez J."/>
            <person name="Shen H."/>
            <person name="Shen Y."/>
            <person name="Subramanian S."/>
            <person name="Tabor P.E."/>
            <person name="Verduzco D."/>
            <person name="Waldron L."/>
            <person name="Wang J."/>
            <person name="Wang J."/>
            <person name="Wang Q."/>
            <person name="Williams G.A."/>
            <person name="Wong G.K.-S."/>
            <person name="Yao Z."/>
            <person name="Zhang J."/>
            <person name="Zhang X."/>
            <person name="Zhao G."/>
            <person name="Zhou J."/>
            <person name="Zhou Y."/>
            <person name="Nelson D."/>
            <person name="Lehrach H."/>
            <person name="Reinhardt R."/>
            <person name="Naylor S.L."/>
            <person name="Yang H."/>
            <person name="Olson M."/>
            <person name="Weinstock G."/>
            <person name="Gibbs R.A."/>
        </authorList>
    </citation>
    <scope>NUCLEOTIDE SEQUENCE [LARGE SCALE GENOMIC DNA]</scope>
</reference>
<reference key="4">
    <citation type="journal article" date="2004" name="Genome Res.">
        <title>The status, quality, and expansion of the NIH full-length cDNA project: the Mammalian Gene Collection (MGC).</title>
        <authorList>
            <consortium name="The MGC Project Team"/>
        </authorList>
    </citation>
    <scope>NUCLEOTIDE SEQUENCE [LARGE SCALE MRNA] (ISOFORM 1)</scope>
    <source>
        <tissue>Testis</tissue>
    </source>
</reference>
<reference key="5">
    <citation type="journal article" date="2002" name="Mol. Vis.">
        <title>Expressed sequence tag analysis of human retina for the NEIBank project: retbindin, an abundant, novel retinal cDNA and alternative splicing of other retina-preferred gene transcripts.</title>
        <authorList>
            <person name="Wistow G."/>
            <person name="Berstein S.L."/>
            <person name="Wyatt M.K."/>
            <person name="Ray S."/>
            <person name="Behal A."/>
            <person name="Touchman J.W."/>
            <person name="Bouffard G."/>
            <person name="Smith D."/>
            <person name="Peterson K."/>
        </authorList>
    </citation>
    <scope>NUCLEOTIDE SEQUENCE [MRNA] OF 1-151 (ISOFORM 3)</scope>
    <scope>VARIANTS THR-117 AND SER-127</scope>
    <source>
        <tissue>Retina</tissue>
    </source>
</reference>
<reference key="6">
    <citation type="journal article" date="2009" name="Anal. Chem.">
        <title>Lys-N and trypsin cover complementary parts of the phosphoproteome in a refined SCX-based approach.</title>
        <authorList>
            <person name="Gauci S."/>
            <person name="Helbig A.O."/>
            <person name="Slijper M."/>
            <person name="Krijgsveld J."/>
            <person name="Heck A.J."/>
            <person name="Mohammed S."/>
        </authorList>
    </citation>
    <scope>ACETYLATION [LARGE SCALE ANALYSIS] AT THR-2</scope>
    <scope>CLEAVAGE OF INITIATOR METHIONINE [LARGE SCALE ANALYSIS]</scope>
    <scope>IDENTIFICATION BY MASS SPECTROMETRY [LARGE SCALE ANALYSIS]</scope>
</reference>
<reference key="7">
    <citation type="journal article" date="2011" name="BMC Syst. Biol.">
        <title>Initial characterization of the human central proteome.</title>
        <authorList>
            <person name="Burkard T.R."/>
            <person name="Planyavsky M."/>
            <person name="Kaupe I."/>
            <person name="Breitwieser F.P."/>
            <person name="Buerckstuemmer T."/>
            <person name="Bennett K.L."/>
            <person name="Superti-Furga G."/>
            <person name="Colinge J."/>
        </authorList>
    </citation>
    <scope>IDENTIFICATION BY MASS SPECTROMETRY [LARGE SCALE ANALYSIS]</scope>
</reference>
<name>FAIM1_HUMAN</name>
<protein>
    <recommendedName>
        <fullName>Fas apoptotic inhibitory molecule 1</fullName>
    </recommendedName>
</protein>
<proteinExistence type="evidence at protein level"/>
<organism>
    <name type="scientific">Homo sapiens</name>
    <name type="common">Human</name>
    <dbReference type="NCBI Taxonomy" id="9606"/>
    <lineage>
        <taxon>Eukaryota</taxon>
        <taxon>Metazoa</taxon>
        <taxon>Chordata</taxon>
        <taxon>Craniata</taxon>
        <taxon>Vertebrata</taxon>
        <taxon>Euteleostomi</taxon>
        <taxon>Mammalia</taxon>
        <taxon>Eutheria</taxon>
        <taxon>Euarchontoglires</taxon>
        <taxon>Primates</taxon>
        <taxon>Haplorrhini</taxon>
        <taxon>Catarrhini</taxon>
        <taxon>Hominidae</taxon>
        <taxon>Homo</taxon>
    </lineage>
</organism>
<sequence>MTDLVAVWDVALSDGVHKIEFEHGTTSGKRVVYVDGKEEIRKEWMFKLVGKETFYVGAAKTKATINIDAISGFAYEYTLEINGKSLKKYMEDRSKTTNTWVLHMDGENFRIVLEKDAMDVWCNGKKLETAGEFVDDGTETHFSIGNHDCYIKAVSSGKRKEGIIHTLIVDNREIPEIAS</sequence>
<keyword id="KW-0002">3D-structure</keyword>
<keyword id="KW-0007">Acetylation</keyword>
<keyword id="KW-0025">Alternative splicing</keyword>
<keyword id="KW-0053">Apoptosis</keyword>
<keyword id="KW-0963">Cytoplasm</keyword>
<keyword id="KW-1267">Proteomics identification</keyword>
<keyword id="KW-1185">Reference proteome</keyword>
<evidence type="ECO:0000250" key="1"/>
<evidence type="ECO:0000269" key="2">
    <source>
    </source>
</evidence>
<evidence type="ECO:0000269" key="3">
    <source ref="2"/>
</evidence>
<evidence type="ECO:0000303" key="4">
    <source>
    </source>
</evidence>
<evidence type="ECO:0000303" key="5">
    <source>
    </source>
</evidence>
<evidence type="ECO:0000305" key="6"/>
<evidence type="ECO:0007744" key="7">
    <source>
    </source>
</evidence>
<evidence type="ECO:0007829" key="8">
    <source>
        <dbReference type="PDB" id="2KW1"/>
    </source>
</evidence>
<evidence type="ECO:0007829" key="9">
    <source>
        <dbReference type="PDB" id="3MX7"/>
    </source>
</evidence>
<feature type="initiator methionine" description="Removed" evidence="7">
    <location>
        <position position="1"/>
    </location>
</feature>
<feature type="chain" id="PRO_0000087173" description="Fas apoptotic inhibitory molecule 1">
    <location>
        <begin position="2"/>
        <end position="179"/>
    </location>
</feature>
<feature type="modified residue" description="N-acetylthreonine" evidence="7">
    <location>
        <position position="2"/>
    </location>
</feature>
<feature type="splice variant" id="VSP_008991" description="In isoform 2." evidence="5">
    <original>M</original>
    <variation>MLLPFIRTLPLLCYNHLLVSPDSATLSPPYSLEKM</variation>
    <location>
        <position position="1"/>
    </location>
</feature>
<feature type="splice variant" id="VSP_038095" description="In isoform 3." evidence="4">
    <original>M</original>
    <variation>MASGDDSPIFEDDESPPYSLEKM</variation>
    <location>
        <position position="1"/>
    </location>
</feature>
<feature type="sequence variant" id="VAR_024314" description="In dbSNP:rs641320." evidence="2 3">
    <original>A</original>
    <variation>T</variation>
    <location>
        <position position="117"/>
    </location>
</feature>
<feature type="sequence variant" id="VAR_024315" description="In dbSNP:rs13043." evidence="2">
    <original>L</original>
    <variation>S</variation>
    <location>
        <position position="127"/>
    </location>
</feature>
<feature type="sequence conflict" description="In Ref. 5; BQ638715." evidence="6" ref="5">
    <original>V</original>
    <variation>L</variation>
    <location>
        <position position="32"/>
    </location>
</feature>
<feature type="sequence conflict" description="In Ref. 2; CAG33403." evidence="6" ref="2">
    <original>N</original>
    <variation>S</variation>
    <location>
        <position position="66"/>
    </location>
</feature>
<feature type="strand" evidence="9">
    <location>
        <begin position="4"/>
        <end position="12"/>
    </location>
</feature>
<feature type="strand" evidence="9">
    <location>
        <begin position="15"/>
        <end position="23"/>
    </location>
</feature>
<feature type="turn" evidence="9">
    <location>
        <begin position="25"/>
        <end position="27"/>
    </location>
</feature>
<feature type="strand" evidence="9">
    <location>
        <begin position="30"/>
        <end position="34"/>
    </location>
</feature>
<feature type="strand" evidence="9">
    <location>
        <begin position="37"/>
        <end position="42"/>
    </location>
</feature>
<feature type="strand" evidence="9">
    <location>
        <begin position="50"/>
        <end position="56"/>
    </location>
</feature>
<feature type="turn" evidence="9">
    <location>
        <begin position="57"/>
        <end position="60"/>
    </location>
</feature>
<feature type="strand" evidence="9">
    <location>
        <begin position="61"/>
        <end position="70"/>
    </location>
</feature>
<feature type="turn" evidence="9">
    <location>
        <begin position="71"/>
        <end position="73"/>
    </location>
</feature>
<feature type="strand" evidence="9">
    <location>
        <begin position="74"/>
        <end position="81"/>
    </location>
</feature>
<feature type="strand" evidence="9">
    <location>
        <begin position="84"/>
        <end position="88"/>
    </location>
</feature>
<feature type="strand" evidence="8">
    <location>
        <begin position="98"/>
        <end position="104"/>
    </location>
</feature>
<feature type="strand" evidence="8">
    <location>
        <begin position="107"/>
        <end position="114"/>
    </location>
</feature>
<feature type="turn" evidence="8">
    <location>
        <begin position="115"/>
        <end position="118"/>
    </location>
</feature>
<feature type="strand" evidence="8">
    <location>
        <begin position="119"/>
        <end position="122"/>
    </location>
</feature>
<feature type="strand" evidence="8">
    <location>
        <begin position="125"/>
        <end position="127"/>
    </location>
</feature>
<feature type="strand" evidence="8">
    <location>
        <begin position="130"/>
        <end position="134"/>
    </location>
</feature>
<feature type="strand" evidence="8">
    <location>
        <begin position="137"/>
        <end position="144"/>
    </location>
</feature>
<feature type="strand" evidence="8">
    <location>
        <begin position="147"/>
        <end position="154"/>
    </location>
</feature>
<feature type="strand" evidence="8">
    <location>
        <begin position="157"/>
        <end position="160"/>
    </location>
</feature>
<feature type="strand" evidence="8">
    <location>
        <begin position="164"/>
        <end position="169"/>
    </location>
</feature>
<feature type="strand" evidence="8">
    <location>
        <begin position="172"/>
        <end position="174"/>
    </location>
</feature>
<dbReference type="EMBL" id="AK001444">
    <property type="protein sequence ID" value="BAA91695.1"/>
    <property type="molecule type" value="mRNA"/>
</dbReference>
<dbReference type="EMBL" id="AK125477">
    <property type="protein sequence ID" value="BAC86174.1"/>
    <property type="status" value="ALT_SEQ"/>
    <property type="molecule type" value="mRNA"/>
</dbReference>
<dbReference type="EMBL" id="CR457122">
    <property type="protein sequence ID" value="CAG33403.1"/>
    <property type="molecule type" value="mRNA"/>
</dbReference>
<dbReference type="EMBL" id="AC020890">
    <property type="status" value="NOT_ANNOTATED_CDS"/>
    <property type="molecule type" value="Genomic_DNA"/>
</dbReference>
<dbReference type="EMBL" id="BC012478">
    <property type="protein sequence ID" value="AAH12478.1"/>
    <property type="molecule type" value="mRNA"/>
</dbReference>
<dbReference type="EMBL" id="BQ638715">
    <property type="status" value="NOT_ANNOTATED_CDS"/>
    <property type="molecule type" value="mRNA"/>
</dbReference>
<dbReference type="CCDS" id="CCDS3103.1">
    <molecule id="Q9NVQ4-1"/>
</dbReference>
<dbReference type="CCDS" id="CCDS33864.1">
    <molecule id="Q9NVQ4-2"/>
</dbReference>
<dbReference type="CCDS" id="CCDS33865.1">
    <molecule id="Q9NVQ4-3"/>
</dbReference>
<dbReference type="RefSeq" id="NP_001028202.1">
    <molecule id="Q9NVQ4-2"/>
    <property type="nucleotide sequence ID" value="NM_001033030.2"/>
</dbReference>
<dbReference type="RefSeq" id="NP_001028203.1">
    <molecule id="Q9NVQ4-3"/>
    <property type="nucleotide sequence ID" value="NM_001033031.2"/>
</dbReference>
<dbReference type="RefSeq" id="NP_001028204.1">
    <molecule id="Q9NVQ4-1"/>
    <property type="nucleotide sequence ID" value="NM_001033032.2"/>
</dbReference>
<dbReference type="RefSeq" id="NP_060617.1">
    <molecule id="Q9NVQ4-1"/>
    <property type="nucleotide sequence ID" value="NM_018147.4"/>
</dbReference>
<dbReference type="RefSeq" id="XP_047304395.1">
    <molecule id="Q9NVQ4-3"/>
    <property type="nucleotide sequence ID" value="XM_047448439.1"/>
</dbReference>
<dbReference type="RefSeq" id="XP_054203046.1">
    <molecule id="Q9NVQ4-3"/>
    <property type="nucleotide sequence ID" value="XM_054347071.1"/>
</dbReference>
<dbReference type="PDB" id="2KW1">
    <property type="method" value="NMR"/>
    <property type="chains" value="A=91-179"/>
</dbReference>
<dbReference type="PDB" id="3MX7">
    <property type="method" value="X-ray"/>
    <property type="resolution" value="1.76 A"/>
    <property type="chains" value="A=1-90"/>
</dbReference>
<dbReference type="PDBsum" id="2KW1"/>
<dbReference type="PDBsum" id="3MX7"/>
<dbReference type="BMRB" id="Q9NVQ4"/>
<dbReference type="SMR" id="Q9NVQ4"/>
<dbReference type="BioGRID" id="120478">
    <property type="interactions" value="49"/>
</dbReference>
<dbReference type="FunCoup" id="Q9NVQ4">
    <property type="interactions" value="440"/>
</dbReference>
<dbReference type="IntAct" id="Q9NVQ4">
    <property type="interactions" value="24"/>
</dbReference>
<dbReference type="STRING" id="9606.ENSP00000342805"/>
<dbReference type="GlyGen" id="Q9NVQ4">
    <property type="glycosylation" value="1 site, 1 O-linked glycan (1 site)"/>
</dbReference>
<dbReference type="iPTMnet" id="Q9NVQ4"/>
<dbReference type="PhosphoSitePlus" id="Q9NVQ4"/>
<dbReference type="BioMuta" id="FAIM"/>
<dbReference type="DMDM" id="38503210"/>
<dbReference type="jPOST" id="Q9NVQ4"/>
<dbReference type="MassIVE" id="Q9NVQ4"/>
<dbReference type="PaxDb" id="9606-ENSP00000342805"/>
<dbReference type="PeptideAtlas" id="Q9NVQ4"/>
<dbReference type="ProteomicsDB" id="82844">
    <molecule id="Q9NVQ4-1"/>
</dbReference>
<dbReference type="ProteomicsDB" id="82845">
    <molecule id="Q9NVQ4-2"/>
</dbReference>
<dbReference type="ProteomicsDB" id="82846">
    <molecule id="Q9NVQ4-3"/>
</dbReference>
<dbReference type="Pumba" id="Q9NVQ4"/>
<dbReference type="Antibodypedia" id="33444">
    <property type="antibodies" value="335 antibodies from 38 providers"/>
</dbReference>
<dbReference type="DNASU" id="55179"/>
<dbReference type="Ensembl" id="ENST00000338446.8">
    <molecule id="Q9NVQ4-2"/>
    <property type="protein sequence ID" value="ENSP00000342805.4"/>
    <property type="gene ID" value="ENSG00000158234.13"/>
</dbReference>
<dbReference type="Ensembl" id="ENST00000360570.8">
    <molecule id="Q9NVQ4-3"/>
    <property type="protein sequence ID" value="ENSP00000353775.3"/>
    <property type="gene ID" value="ENSG00000158234.13"/>
</dbReference>
<dbReference type="Ensembl" id="ENST00000393034.6">
    <molecule id="Q9NVQ4-1"/>
    <property type="protein sequence ID" value="ENSP00000376754.2"/>
    <property type="gene ID" value="ENSG00000158234.13"/>
</dbReference>
<dbReference type="Ensembl" id="ENST00000393035.6">
    <molecule id="Q9NVQ4-1"/>
    <property type="protein sequence ID" value="ENSP00000376755.2"/>
    <property type="gene ID" value="ENSG00000158234.13"/>
</dbReference>
<dbReference type="Ensembl" id="ENST00000464668.5">
    <molecule id="Q9NVQ4-1"/>
    <property type="protein sequence ID" value="ENSP00000417642.1"/>
    <property type="gene ID" value="ENSG00000158234.13"/>
</dbReference>
<dbReference type="GeneID" id="55179"/>
<dbReference type="KEGG" id="hsa:55179"/>
<dbReference type="MANE-Select" id="ENST00000360570.8">
    <molecule id="Q9NVQ4-3"/>
    <property type="protein sequence ID" value="ENSP00000353775.3"/>
    <property type="RefSeq nucleotide sequence ID" value="NM_001033031.2"/>
    <property type="RefSeq protein sequence ID" value="NP_001028203.1"/>
</dbReference>
<dbReference type="UCSC" id="uc003esp.4">
    <molecule id="Q9NVQ4-1"/>
    <property type="organism name" value="human"/>
</dbReference>
<dbReference type="AGR" id="HGNC:18703"/>
<dbReference type="CTD" id="55179"/>
<dbReference type="DisGeNET" id="55179"/>
<dbReference type="GeneCards" id="FAIM"/>
<dbReference type="HGNC" id="HGNC:18703">
    <property type="gene designation" value="FAIM"/>
</dbReference>
<dbReference type="HPA" id="ENSG00000158234">
    <property type="expression patterns" value="Tissue enriched (retina)"/>
</dbReference>
<dbReference type="MIM" id="617535">
    <property type="type" value="gene"/>
</dbReference>
<dbReference type="neXtProt" id="NX_Q9NVQ4"/>
<dbReference type="OpenTargets" id="ENSG00000158234"/>
<dbReference type="PharmGKB" id="PA38647"/>
<dbReference type="VEuPathDB" id="HostDB:ENSG00000158234"/>
<dbReference type="eggNOG" id="KOG4352">
    <property type="taxonomic scope" value="Eukaryota"/>
</dbReference>
<dbReference type="GeneTree" id="ENSGT00390000007364"/>
<dbReference type="InParanoid" id="Q9NVQ4"/>
<dbReference type="OrthoDB" id="6262731at2759"/>
<dbReference type="PAN-GO" id="Q9NVQ4">
    <property type="GO annotations" value="3 GO annotations based on evolutionary models"/>
</dbReference>
<dbReference type="PhylomeDB" id="Q9NVQ4"/>
<dbReference type="TreeFam" id="TF314971"/>
<dbReference type="PathwayCommons" id="Q9NVQ4"/>
<dbReference type="SignaLink" id="Q9NVQ4"/>
<dbReference type="BioGRID-ORCS" id="55179">
    <property type="hits" value="45 hits in 1155 CRISPR screens"/>
</dbReference>
<dbReference type="ChiTaRS" id="FAIM">
    <property type="organism name" value="human"/>
</dbReference>
<dbReference type="EvolutionaryTrace" id="Q9NVQ4"/>
<dbReference type="GenomeRNAi" id="55179"/>
<dbReference type="Pharos" id="Q9NVQ4">
    <property type="development level" value="Tbio"/>
</dbReference>
<dbReference type="PRO" id="PR:Q9NVQ4"/>
<dbReference type="Proteomes" id="UP000005640">
    <property type="component" value="Chromosome 3"/>
</dbReference>
<dbReference type="RNAct" id="Q9NVQ4">
    <property type="molecule type" value="protein"/>
</dbReference>
<dbReference type="Bgee" id="ENSG00000158234">
    <property type="expression patterns" value="Expressed in bronchial epithelial cell and 202 other cell types or tissues"/>
</dbReference>
<dbReference type="ExpressionAtlas" id="Q9NVQ4">
    <property type="expression patterns" value="baseline and differential"/>
</dbReference>
<dbReference type="GO" id="GO:0005737">
    <property type="term" value="C:cytoplasm"/>
    <property type="evidence" value="ECO:0007669"/>
    <property type="project" value="UniProtKB-SubCell"/>
</dbReference>
<dbReference type="GO" id="GO:0006915">
    <property type="term" value="P:apoptotic process"/>
    <property type="evidence" value="ECO:0007669"/>
    <property type="project" value="UniProtKB-KW"/>
</dbReference>
<dbReference type="GO" id="GO:1902042">
    <property type="term" value="P:negative regulation of extrinsic apoptotic signaling pathway via death domain receptors"/>
    <property type="evidence" value="ECO:0000318"/>
    <property type="project" value="GO_Central"/>
</dbReference>
<dbReference type="FunFam" id="2.40.128.180:FF:000001">
    <property type="entry name" value="Fas apoptotic inhibitory molecule 1"/>
    <property type="match status" value="1"/>
</dbReference>
<dbReference type="FunFam" id="2.40.128.180:FF:000002">
    <property type="entry name" value="Fas apoptotic inhibitory molecule 1"/>
    <property type="match status" value="1"/>
</dbReference>
<dbReference type="Gene3D" id="2.40.128.180">
    <property type="match status" value="2"/>
</dbReference>
<dbReference type="InterPro" id="IPR010695">
    <property type="entry name" value="FAIM1"/>
</dbReference>
<dbReference type="InterPro" id="IPR038513">
    <property type="entry name" value="FAIM1_dom_sf"/>
</dbReference>
<dbReference type="PANTHER" id="PTHR13088:SF3">
    <property type="entry name" value="FAS APOPTOTIC INHIBITORY MOLECULE 1"/>
    <property type="match status" value="1"/>
</dbReference>
<dbReference type="PANTHER" id="PTHR13088">
    <property type="entry name" value="FAS APOPTOTIC INHIBITORY MOLECULE FAIM"/>
    <property type="match status" value="1"/>
</dbReference>
<dbReference type="Pfam" id="PF06905">
    <property type="entry name" value="FAIM1"/>
    <property type="match status" value="1"/>
</dbReference>
<gene>
    <name type="primary">FAIM</name>
    <name type="synonym">FAIM1</name>
</gene>